<protein>
    <recommendedName>
        <fullName>Intercellular adhesion molecule 4</fullName>
        <shortName>ICAM-4</shortName>
    </recommendedName>
    <alternativeName>
        <fullName>Landsteiner-Wiener blood group glycoprotein</fullName>
        <shortName>LW blood group protein</shortName>
    </alternativeName>
    <cdAntigenName>CD242</cdAntigenName>
</protein>
<feature type="signal peptide" evidence="4">
    <location>
        <begin position="1"/>
        <end position="22"/>
    </location>
</feature>
<feature type="chain" id="PRO_0000014796" description="Intercellular adhesion molecule 4">
    <location>
        <begin position="23"/>
        <end position="271"/>
    </location>
</feature>
<feature type="topological domain" description="Extracellular" evidence="4">
    <location>
        <begin position="23"/>
        <end position="240"/>
    </location>
</feature>
<feature type="transmembrane region" description="Helical" evidence="4">
    <location>
        <begin position="241"/>
        <end position="261"/>
    </location>
</feature>
<feature type="topological domain" description="Cytoplasmic" evidence="4">
    <location>
        <begin position="262"/>
        <end position="271"/>
    </location>
</feature>
<feature type="domain" description="Ig-like C2-type 1">
    <location>
        <begin position="62"/>
        <end position="124"/>
    </location>
</feature>
<feature type="domain" description="Ig-like C2-type 2">
    <location>
        <begin position="146"/>
        <end position="217"/>
    </location>
</feature>
<feature type="glycosylation site" description="N-linked (GlcNAc...) asparagine" evidence="4">
    <location>
        <position position="68"/>
    </location>
</feature>
<feature type="glycosylation site" description="N-linked (GlcNAc...) asparagine" evidence="4">
    <location>
        <position position="78"/>
    </location>
</feature>
<feature type="glycosylation site" description="N-linked (GlcNAc...) asparagine" evidence="4">
    <location>
        <position position="190"/>
    </location>
</feature>
<feature type="glycosylation site" description="N-linked (GlcNAc...) asparagine" evidence="4">
    <location>
        <position position="223"/>
    </location>
</feature>
<feature type="disulfide bond" evidence="1">
    <location>
        <begin position="69"/>
        <end position="117"/>
    </location>
</feature>
<feature type="disulfide bond" evidence="2 5">
    <location>
        <begin position="69"/>
        <end position="113"/>
    </location>
</feature>
<feature type="disulfide bond" evidence="2">
    <location>
        <begin position="73"/>
        <end position="117"/>
    </location>
</feature>
<feature type="disulfide bond" evidence="1">
    <location>
        <begin position="153"/>
        <end position="210"/>
    </location>
</feature>
<feature type="splice variant" id="VSP_043229" description="In isoform 3." evidence="9 11">
    <original>KPPHSVILEPPVLKGRKYTLRCHVTQVFPVGYLVVTLRHGSRVIYSESLERFTGLDLANVTLTYEFAAGPRDFWQPVICHARLNLDGLVVRNSSAPITLMLAWSPAPTALASGSIAALVGILLTVGAAYLCKCLAMKSQA</original>
    <variation>SVPGGLLGGDPEAWKPGHLFRKPGALHRPGSGQRDLDLRVCCWTPRLLAARDLPRAPQSRRPGGPQQLGTHYTDARLEPRAHSFGLRFHRCPCRDPPHCGRCVPMQVPSYEVPGVKGDVLCRLSEKKRNMKQSGEMAIHGG</variation>
    <location>
        <begin position="132"/>
        <end position="271"/>
    </location>
</feature>
<feature type="splice variant" id="VSP_002519" description="In isoform Short." evidence="10">
    <original>AWSPAPTALASGSIAALVGILLTVGAAYLCKCLAMKSQA</original>
    <variation>GEAPL</variation>
    <location>
        <begin position="233"/>
        <end position="271"/>
    </location>
</feature>
<feature type="sequence variant" id="VAR_003912" description="In LW(B); dbSNP:rs77493670." evidence="7">
    <original>Q</original>
    <variation>R</variation>
    <location>
        <position position="100"/>
    </location>
</feature>
<feature type="sequence variant" id="VAR_038721" description="In dbSNP:rs36023325." evidence="8">
    <original>V</original>
    <variation>L</variation>
    <location>
        <position position="208"/>
    </location>
</feature>
<feature type="sequence conflict" description="In Ref. 1; AAA59538/AAA59537." evidence="12" ref="1">
    <original>AAAYPGVGSALGRRTK</original>
    <variation>RPPTRELGARWDAGL</variation>
    <location>
        <begin position="14"/>
        <end position="29"/>
    </location>
</feature>
<organism>
    <name type="scientific">Homo sapiens</name>
    <name type="common">Human</name>
    <dbReference type="NCBI Taxonomy" id="9606"/>
    <lineage>
        <taxon>Eukaryota</taxon>
        <taxon>Metazoa</taxon>
        <taxon>Chordata</taxon>
        <taxon>Craniata</taxon>
        <taxon>Vertebrata</taxon>
        <taxon>Euteleostomi</taxon>
        <taxon>Mammalia</taxon>
        <taxon>Eutheria</taxon>
        <taxon>Euarchontoglires</taxon>
        <taxon>Primates</taxon>
        <taxon>Haplorrhini</taxon>
        <taxon>Catarrhini</taxon>
        <taxon>Hominidae</taxon>
        <taxon>Homo</taxon>
    </lineage>
</organism>
<proteinExistence type="evidence at protein level"/>
<accession>Q14773</accession>
<accession>A0M8X2</accession>
<accession>Q14771</accession>
<accession>Q14772</accession>
<accession>Q16375</accession>
<accession>Q9BWR0</accession>
<comment type="function">
    <text evidence="6">ICAM proteins are ligands for the leukocyte adhesion protein LFA-1 (integrin alpha-L/beta-2). ICAM4 is also a ligand for alpha-4/beta-1 and alpha-V integrins.</text>
</comment>
<comment type="interaction">
    <interactant intactId="EBI-10233928">
        <id>Q14773-3</id>
    </interactant>
    <interactant intactId="EBI-3867333">
        <id>A8MQ03</id>
        <label>CYSRT1</label>
    </interactant>
    <organismsDiffer>false</organismsDiffer>
    <experiments>3</experiments>
</comment>
<comment type="interaction">
    <interactant intactId="EBI-10233928">
        <id>Q14773-3</id>
    </interactant>
    <interactant intactId="EBI-948001">
        <id>Q15323</id>
        <label>KRT31</label>
    </interactant>
    <organismsDiffer>false</organismsDiffer>
    <experiments>6</experiments>
</comment>
<comment type="interaction">
    <interactant intactId="EBI-10233928">
        <id>Q14773-3</id>
    </interactant>
    <interactant intactId="EBI-1047093">
        <id>O76011</id>
        <label>KRT34</label>
    </interactant>
    <organismsDiffer>false</organismsDiffer>
    <experiments>3</experiments>
</comment>
<comment type="interaction">
    <interactant intactId="EBI-10233928">
        <id>Q14773-3</id>
    </interactant>
    <interactant intactId="EBI-11522433">
        <id>Q5JR59-3</id>
        <label>MTUS2</label>
    </interactant>
    <organismsDiffer>false</organismsDiffer>
    <experiments>3</experiments>
</comment>
<comment type="interaction">
    <interactant intactId="EBI-10233928">
        <id>Q14773-3</id>
    </interactant>
    <interactant intactId="EBI-945833">
        <id>Q7Z3S9</id>
        <label>NOTCH2NLA</label>
    </interactant>
    <organismsDiffer>false</organismsDiffer>
    <experiments>3</experiments>
</comment>
<comment type="interaction">
    <interactant intactId="EBI-10233928">
        <id>Q14773-3</id>
    </interactant>
    <interactant intactId="EBI-22310682">
        <id>P0DPK4</id>
        <label>NOTCH2NLC</label>
    </interactant>
    <organismsDiffer>false</organismsDiffer>
    <experiments>3</experiments>
</comment>
<comment type="subcellular location">
    <molecule>Isoform Long</molecule>
    <subcellularLocation>
        <location>Cell membrane</location>
        <topology>Single-pass type I membrane protein</topology>
    </subcellularLocation>
</comment>
<comment type="subcellular location">
    <molecule>Isoform Short</molecule>
    <subcellularLocation>
        <location evidence="12">Secreted</location>
    </subcellularLocation>
</comment>
<comment type="subcellular location">
    <subcellularLocation>
        <location evidence="3">Cell membrane</location>
        <topology evidence="4">Single-pass type I membrane protein</topology>
    </subcellularLocation>
</comment>
<comment type="alternative products">
    <event type="alternative splicing"/>
    <isoform>
        <id>Q14773-1</id>
        <name>Long</name>
        <sequence type="displayed"/>
    </isoform>
    <isoform>
        <id>Q14773-2</id>
        <name>Short</name>
        <sequence type="described" ref="VSP_002519"/>
    </isoform>
    <isoform>
        <id>Q14773-3</id>
        <name>3</name>
        <sequence type="described" ref="VSP_043229"/>
    </isoform>
</comment>
<comment type="tissue specificity">
    <text>Erythrocytes.</text>
</comment>
<comment type="PTM">
    <text>N- and O-glycosylated.</text>
</comment>
<comment type="polymorphism">
    <text evidence="7">Responsible for the Landsteiner-Wiener blood group system [MIM:111250]. The molecular basis of the LW(A)=LW5/LW(B)=LW7 blood group antigens is a single variation in position 100; Gln-100 corresponds to LW(A) and Arg-100 to LW(B).</text>
</comment>
<comment type="similarity">
    <text evidence="12">Belongs to the immunoglobulin superfamily. ICAM family.</text>
</comment>
<name>ICAM4_HUMAN</name>
<gene>
    <name type="primary">ICAM4</name>
    <name type="synonym">LW</name>
</gene>
<reference key="1">
    <citation type="journal article" date="1994" name="Proc. Natl. Acad. Sci. U.S.A.">
        <title>The LW blood group glycoprotein is homologous to intercellular adhesion molecules.</title>
        <authorList>
            <person name="Bailly P."/>
            <person name="Hermand P."/>
            <person name="Callebaut I."/>
            <person name="Sonneborn H.H."/>
            <person name="Khamlichi S."/>
            <person name="Mornon J.-P."/>
            <person name="Cartron J.-P."/>
        </authorList>
    </citation>
    <scope>NUCLEOTIDE SEQUENCE [MRNA] (ISOFORMS LONG AND SHORT)</scope>
</reference>
<reference key="2">
    <citation type="journal article" date="1996" name="Blood">
        <title>Characterization of the gene encoding the human LW blood group protein in LW+ and LW- phenotypes.</title>
        <authorList>
            <person name="Hermand P."/>
            <person name="le Pennec P.Y."/>
            <person name="Rouger P."/>
            <person name="Cartron J.-P."/>
            <person name="Bailly P."/>
        </authorList>
    </citation>
    <scope>NUCLEOTIDE SEQUENCE [GENOMIC DNA] (ISOFORM LONG)</scope>
</reference>
<reference key="3">
    <citation type="submission" date="2003-08" db="EMBL/GenBank/DDBJ databases">
        <title>Cloning of human full-length CDSs in BD Creator(TM) system donor vector.</title>
        <authorList>
            <person name="Kalnine N."/>
            <person name="Chen X."/>
            <person name="Rolfs A."/>
            <person name="Halleck A."/>
            <person name="Hines L."/>
            <person name="Eisenstein S."/>
            <person name="Koundinya M."/>
            <person name="Raphael J."/>
            <person name="Moreira D."/>
            <person name="Kelley T."/>
            <person name="LaBaer J."/>
            <person name="Lin Y."/>
            <person name="Phelan M."/>
            <person name="Farmer A."/>
        </authorList>
    </citation>
    <scope>NUCLEOTIDE SEQUENCE [LARGE SCALE MRNA] (ISOFORM 3)</scope>
</reference>
<reference key="4">
    <citation type="submission" date="2005-04" db="EMBL/GenBank/DDBJ databases">
        <authorList>
            <consortium name="SeattleSNPs variation discovery resource"/>
        </authorList>
    </citation>
    <scope>NUCLEOTIDE SEQUENCE [GENOMIC DNA]</scope>
    <scope>VARIANT LEU-208</scope>
</reference>
<reference key="5">
    <citation type="journal article" date="2004" name="Nature">
        <title>The DNA sequence and biology of human chromosome 19.</title>
        <authorList>
            <person name="Grimwood J."/>
            <person name="Gordon L.A."/>
            <person name="Olsen A.S."/>
            <person name="Terry A."/>
            <person name="Schmutz J."/>
            <person name="Lamerdin J.E."/>
            <person name="Hellsten U."/>
            <person name="Goodstein D."/>
            <person name="Couronne O."/>
            <person name="Tran-Gyamfi M."/>
            <person name="Aerts A."/>
            <person name="Altherr M."/>
            <person name="Ashworth L."/>
            <person name="Bajorek E."/>
            <person name="Black S."/>
            <person name="Branscomb E."/>
            <person name="Caenepeel S."/>
            <person name="Carrano A.V."/>
            <person name="Caoile C."/>
            <person name="Chan Y.M."/>
            <person name="Christensen M."/>
            <person name="Cleland C.A."/>
            <person name="Copeland A."/>
            <person name="Dalin E."/>
            <person name="Dehal P."/>
            <person name="Denys M."/>
            <person name="Detter J.C."/>
            <person name="Escobar J."/>
            <person name="Flowers D."/>
            <person name="Fotopulos D."/>
            <person name="Garcia C."/>
            <person name="Georgescu A.M."/>
            <person name="Glavina T."/>
            <person name="Gomez M."/>
            <person name="Gonzales E."/>
            <person name="Groza M."/>
            <person name="Hammon N."/>
            <person name="Hawkins T."/>
            <person name="Haydu L."/>
            <person name="Ho I."/>
            <person name="Huang W."/>
            <person name="Israni S."/>
            <person name="Jett J."/>
            <person name="Kadner K."/>
            <person name="Kimball H."/>
            <person name="Kobayashi A."/>
            <person name="Larionov V."/>
            <person name="Leem S.-H."/>
            <person name="Lopez F."/>
            <person name="Lou Y."/>
            <person name="Lowry S."/>
            <person name="Malfatti S."/>
            <person name="Martinez D."/>
            <person name="McCready P.M."/>
            <person name="Medina C."/>
            <person name="Morgan J."/>
            <person name="Nelson K."/>
            <person name="Nolan M."/>
            <person name="Ovcharenko I."/>
            <person name="Pitluck S."/>
            <person name="Pollard M."/>
            <person name="Popkie A.P."/>
            <person name="Predki P."/>
            <person name="Quan G."/>
            <person name="Ramirez L."/>
            <person name="Rash S."/>
            <person name="Retterer J."/>
            <person name="Rodriguez A."/>
            <person name="Rogers S."/>
            <person name="Salamov A."/>
            <person name="Salazar A."/>
            <person name="She X."/>
            <person name="Smith D."/>
            <person name="Slezak T."/>
            <person name="Solovyev V."/>
            <person name="Thayer N."/>
            <person name="Tice H."/>
            <person name="Tsai M."/>
            <person name="Ustaszewska A."/>
            <person name="Vo N."/>
            <person name="Wagner M."/>
            <person name="Wheeler J."/>
            <person name="Wu K."/>
            <person name="Xie G."/>
            <person name="Yang J."/>
            <person name="Dubchak I."/>
            <person name="Furey T.S."/>
            <person name="DeJong P."/>
            <person name="Dickson M."/>
            <person name="Gordon D."/>
            <person name="Eichler E.E."/>
            <person name="Pennacchio L.A."/>
            <person name="Richardson P."/>
            <person name="Stubbs L."/>
            <person name="Rokhsar D.S."/>
            <person name="Myers R.M."/>
            <person name="Rubin E.M."/>
            <person name="Lucas S.M."/>
        </authorList>
    </citation>
    <scope>NUCLEOTIDE SEQUENCE [LARGE SCALE GENOMIC DNA]</scope>
</reference>
<reference key="6">
    <citation type="submission" date="2005-07" db="EMBL/GenBank/DDBJ databases">
        <authorList>
            <person name="Mural R.J."/>
            <person name="Istrail S."/>
            <person name="Sutton G."/>
            <person name="Florea L."/>
            <person name="Halpern A.L."/>
            <person name="Mobarry C.M."/>
            <person name="Lippert R."/>
            <person name="Walenz B."/>
            <person name="Shatkay H."/>
            <person name="Dew I."/>
            <person name="Miller J.R."/>
            <person name="Flanigan M.J."/>
            <person name="Edwards N.J."/>
            <person name="Bolanos R."/>
            <person name="Fasulo D."/>
            <person name="Halldorsson B.V."/>
            <person name="Hannenhalli S."/>
            <person name="Turner R."/>
            <person name="Yooseph S."/>
            <person name="Lu F."/>
            <person name="Nusskern D.R."/>
            <person name="Shue B.C."/>
            <person name="Zheng X.H."/>
            <person name="Zhong F."/>
            <person name="Delcher A.L."/>
            <person name="Huson D.H."/>
            <person name="Kravitz S.A."/>
            <person name="Mouchard L."/>
            <person name="Reinert K."/>
            <person name="Remington K.A."/>
            <person name="Clark A.G."/>
            <person name="Waterman M.S."/>
            <person name="Eichler E.E."/>
            <person name="Adams M.D."/>
            <person name="Hunkapiller M.W."/>
            <person name="Myers E.W."/>
            <person name="Venter J.C."/>
        </authorList>
    </citation>
    <scope>NUCLEOTIDE SEQUENCE [LARGE SCALE GENOMIC DNA]</scope>
</reference>
<reference key="7">
    <citation type="journal article" date="2004" name="Genome Res.">
        <title>The status, quality, and expansion of the NIH full-length cDNA project: the Mammalian Gene Collection (MGC).</title>
        <authorList>
            <consortium name="The MGC Project Team"/>
        </authorList>
    </citation>
    <scope>NUCLEOTIDE SEQUENCE [LARGE SCALE MRNA] (ISOFORMS LONG AND 3)</scope>
    <source>
        <tissue>Lung</tissue>
        <tissue>Placenta</tissue>
    </source>
</reference>
<reference key="8">
    <citation type="journal article" date="1995" name="Blood">
        <title>Molecular basis and expression of the LWa/LWb blood group polymorphism.</title>
        <authorList>
            <person name="Hermand P."/>
            <person name="Gane P."/>
            <person name="Mattei M.-G."/>
            <person name="Sistonen P."/>
            <person name="Cartron J.-P."/>
            <person name="Bailly P."/>
        </authorList>
    </citation>
    <scope>NUCLEOTIDE SEQUENCE [MRNA] OF 1-130</scope>
    <scope>VARIANT BLOOD GROUP LW(B) ARG-100</scope>
</reference>
<reference key="9">
    <citation type="journal article" date="2001" name="Blood">
        <title>Intercellular adhesion molecule-4 binds alpha(4)beta(1) and alpha(V)-family integrins through novel integrin-binding mechanisms.</title>
        <authorList>
            <person name="Spring F.A."/>
            <person name="Parsons S.F."/>
            <person name="Ortlepp S."/>
            <person name="Olsson M.L."/>
            <person name="Sessions R."/>
            <person name="Brady R.L."/>
            <person name="Anstee D.J."/>
        </authorList>
    </citation>
    <scope>FUNCTION</scope>
</reference>
<keyword id="KW-0025">Alternative splicing</keyword>
<keyword id="KW-0095">Blood group antigen</keyword>
<keyword id="KW-0130">Cell adhesion</keyword>
<keyword id="KW-1003">Cell membrane</keyword>
<keyword id="KW-1015">Disulfide bond</keyword>
<keyword id="KW-0325">Glycoprotein</keyword>
<keyword id="KW-0393">Immunoglobulin domain</keyword>
<keyword id="KW-0472">Membrane</keyword>
<keyword id="KW-1267">Proteomics identification</keyword>
<keyword id="KW-1185">Reference proteome</keyword>
<keyword id="KW-0677">Repeat</keyword>
<keyword id="KW-0964">Secreted</keyword>
<keyword id="KW-0732">Signal</keyword>
<keyword id="KW-0812">Transmembrane</keyword>
<keyword id="KW-1133">Transmembrane helix</keyword>
<dbReference type="EMBL" id="L27671">
    <property type="protein sequence ID" value="AAA59538.1"/>
    <property type="molecule type" value="mRNA"/>
</dbReference>
<dbReference type="EMBL" id="L27670">
    <property type="protein sequence ID" value="AAA59537.1"/>
    <property type="molecule type" value="mRNA"/>
</dbReference>
<dbReference type="EMBL" id="X93093">
    <property type="protein sequence ID" value="CAA63646.1"/>
    <property type="molecule type" value="Genomic_DNA"/>
</dbReference>
<dbReference type="EMBL" id="BT009816">
    <property type="protein sequence ID" value="AAP88818.1"/>
    <property type="molecule type" value="mRNA"/>
</dbReference>
<dbReference type="EMBL" id="DQ011692">
    <property type="protein sequence ID" value="AAY16986.1"/>
    <property type="molecule type" value="Genomic_DNA"/>
</dbReference>
<dbReference type="EMBL" id="AC011511">
    <property type="status" value="NOT_ANNOTATED_CDS"/>
    <property type="molecule type" value="Genomic_DNA"/>
</dbReference>
<dbReference type="EMBL" id="CH471106">
    <property type="protein sequence ID" value="EAW84089.1"/>
    <property type="molecule type" value="Genomic_DNA"/>
</dbReference>
<dbReference type="EMBL" id="BC000046">
    <property type="protein sequence ID" value="AAH00046.1"/>
    <property type="molecule type" value="mRNA"/>
</dbReference>
<dbReference type="EMBL" id="BC029364">
    <property type="protein sequence ID" value="AAH29364.1"/>
    <property type="molecule type" value="mRNA"/>
</dbReference>
<dbReference type="EMBL" id="S78852">
    <property type="protein sequence ID" value="AAB35046.1"/>
    <property type="molecule type" value="mRNA"/>
</dbReference>
<dbReference type="CCDS" id="CCDS12232.1">
    <molecule id="Q14773-1"/>
</dbReference>
<dbReference type="CCDS" id="CCDS32904.1">
    <molecule id="Q14773-3"/>
</dbReference>
<dbReference type="PIR" id="I52612">
    <property type="entry name" value="I52612"/>
</dbReference>
<dbReference type="PIR" id="I59300">
    <property type="entry name" value="I59300"/>
</dbReference>
<dbReference type="PIR" id="I80159">
    <property type="entry name" value="I80159"/>
</dbReference>
<dbReference type="RefSeq" id="NP_001034221.1">
    <molecule id="Q14773-3"/>
    <property type="nucleotide sequence ID" value="NM_001039132.3"/>
</dbReference>
<dbReference type="RefSeq" id="NP_001535.1">
    <molecule id="Q14773-1"/>
    <property type="nucleotide sequence ID" value="NM_001544.5"/>
</dbReference>
<dbReference type="SMR" id="Q14773"/>
<dbReference type="BioGRID" id="109613">
    <property type="interactions" value="46"/>
</dbReference>
<dbReference type="CORUM" id="Q14773"/>
<dbReference type="FunCoup" id="Q14773">
    <property type="interactions" value="636"/>
</dbReference>
<dbReference type="IntAct" id="Q14773">
    <property type="interactions" value="40"/>
</dbReference>
<dbReference type="MINT" id="Q14773"/>
<dbReference type="STRING" id="9606.ENSP00000342114"/>
<dbReference type="GlyCosmos" id="Q14773">
    <property type="glycosylation" value="4 sites, No reported glycans"/>
</dbReference>
<dbReference type="GlyGen" id="Q14773">
    <property type="glycosylation" value="6 sites, 2 N-linked glycans (2 sites), 2 O-linked glycans (2 sites)"/>
</dbReference>
<dbReference type="iPTMnet" id="Q14773"/>
<dbReference type="BioMuta" id="ICAM4"/>
<dbReference type="DMDM" id="2497309"/>
<dbReference type="MassIVE" id="Q14773"/>
<dbReference type="PaxDb" id="9606-ENSP00000342114"/>
<dbReference type="PeptideAtlas" id="Q14773"/>
<dbReference type="ProteomicsDB" id="60165">
    <molecule id="Q14773-1"/>
</dbReference>
<dbReference type="ProteomicsDB" id="60166">
    <molecule id="Q14773-2"/>
</dbReference>
<dbReference type="Pumba" id="Q14773"/>
<dbReference type="TopDownProteomics" id="Q14773-1">
    <molecule id="Q14773-1"/>
</dbReference>
<dbReference type="Antibodypedia" id="25271">
    <property type="antibodies" value="266 antibodies from 29 providers"/>
</dbReference>
<dbReference type="DNASU" id="3386"/>
<dbReference type="Ensembl" id="ENST00000340992.4">
    <molecule id="Q14773-3"/>
    <property type="protein sequence ID" value="ENSP00000342114.3"/>
    <property type="gene ID" value="ENSG00000105371.10"/>
</dbReference>
<dbReference type="Ensembl" id="ENST00000380770.5">
    <molecule id="Q14773-1"/>
    <property type="protein sequence ID" value="ENSP00000370147.2"/>
    <property type="gene ID" value="ENSG00000105371.10"/>
</dbReference>
<dbReference type="Ensembl" id="ENST00000393717.2">
    <molecule id="Q14773-2"/>
    <property type="protein sequence ID" value="ENSP00000377320.1"/>
    <property type="gene ID" value="ENSG00000105371.10"/>
</dbReference>
<dbReference type="GeneID" id="3386"/>
<dbReference type="KEGG" id="hsa:3386"/>
<dbReference type="MANE-Select" id="ENST00000380770.5">
    <property type="protein sequence ID" value="ENSP00000370147.2"/>
    <property type="RefSeq nucleotide sequence ID" value="NM_001544.5"/>
    <property type="RefSeq protein sequence ID" value="NP_001535.1"/>
</dbReference>
<dbReference type="UCSC" id="uc002mns.3">
    <molecule id="Q14773-1"/>
    <property type="organism name" value="human"/>
</dbReference>
<dbReference type="AGR" id="HGNC:5347"/>
<dbReference type="CTD" id="3386"/>
<dbReference type="DisGeNET" id="3386"/>
<dbReference type="GeneCards" id="ICAM4"/>
<dbReference type="HGNC" id="HGNC:5347">
    <property type="gene designation" value="ICAM4"/>
</dbReference>
<dbReference type="HPA" id="ENSG00000105371">
    <property type="expression patterns" value="Group enriched (bone marrow, lung)"/>
</dbReference>
<dbReference type="MalaCards" id="ICAM4"/>
<dbReference type="MIM" id="111250">
    <property type="type" value="phenotype"/>
</dbReference>
<dbReference type="MIM" id="614088">
    <property type="type" value="gene"/>
</dbReference>
<dbReference type="neXtProt" id="NX_Q14773"/>
<dbReference type="OpenTargets" id="ENSG00000105371"/>
<dbReference type="PharmGKB" id="PA29595"/>
<dbReference type="VEuPathDB" id="HostDB:ENSG00000105371"/>
<dbReference type="eggNOG" id="ENOG502TF7X">
    <property type="taxonomic scope" value="Eukaryota"/>
</dbReference>
<dbReference type="GeneTree" id="ENSGT00940000162431"/>
<dbReference type="HOGENOM" id="CLU_1165526_0_0_1"/>
<dbReference type="InParanoid" id="Q14773"/>
<dbReference type="OMA" id="QPVICHT"/>
<dbReference type="OrthoDB" id="10012075at2759"/>
<dbReference type="PAN-GO" id="Q14773">
    <property type="GO annotations" value="3 GO annotations based on evolutionary models"/>
</dbReference>
<dbReference type="PhylomeDB" id="Q14773"/>
<dbReference type="PathwayCommons" id="Q14773"/>
<dbReference type="Reactome" id="R-HSA-198933">
    <property type="pathway name" value="Immunoregulatory interactions between a Lymphoid and a non-Lymphoid cell"/>
</dbReference>
<dbReference type="Reactome" id="R-HSA-216083">
    <property type="pathway name" value="Integrin cell surface interactions"/>
</dbReference>
<dbReference type="SignaLink" id="Q14773"/>
<dbReference type="SIGNOR" id="Q14773"/>
<dbReference type="BioGRID-ORCS" id="3386">
    <property type="hits" value="15 hits in 1156 CRISPR screens"/>
</dbReference>
<dbReference type="GenomeRNAi" id="3386"/>
<dbReference type="Pharos" id="Q14773">
    <property type="development level" value="Tbio"/>
</dbReference>
<dbReference type="PRO" id="PR:Q14773"/>
<dbReference type="Proteomes" id="UP000005640">
    <property type="component" value="Chromosome 19"/>
</dbReference>
<dbReference type="RNAct" id="Q14773">
    <property type="molecule type" value="protein"/>
</dbReference>
<dbReference type="Bgee" id="ENSG00000105371">
    <property type="expression patterns" value="Expressed in male germ line stem cell (sensu Vertebrata) in testis and 103 other cell types or tissues"/>
</dbReference>
<dbReference type="ExpressionAtlas" id="Q14773">
    <property type="expression patterns" value="baseline and differential"/>
</dbReference>
<dbReference type="GO" id="GO:0005576">
    <property type="term" value="C:extracellular region"/>
    <property type="evidence" value="ECO:0007669"/>
    <property type="project" value="UniProtKB-SubCell"/>
</dbReference>
<dbReference type="GO" id="GO:0016020">
    <property type="term" value="C:membrane"/>
    <property type="evidence" value="ECO:0000304"/>
    <property type="project" value="ProtInc"/>
</dbReference>
<dbReference type="GO" id="GO:0005886">
    <property type="term" value="C:plasma membrane"/>
    <property type="evidence" value="ECO:0000318"/>
    <property type="project" value="GO_Central"/>
</dbReference>
<dbReference type="GO" id="GO:0005178">
    <property type="term" value="F:integrin binding"/>
    <property type="evidence" value="ECO:0000318"/>
    <property type="project" value="GO_Central"/>
</dbReference>
<dbReference type="GO" id="GO:0007155">
    <property type="term" value="P:cell adhesion"/>
    <property type="evidence" value="ECO:0000318"/>
    <property type="project" value="GO_Central"/>
</dbReference>
<dbReference type="GO" id="GO:0098609">
    <property type="term" value="P:cell-cell adhesion"/>
    <property type="evidence" value="ECO:0007669"/>
    <property type="project" value="InterPro"/>
</dbReference>
<dbReference type="FunFam" id="2.60.40.10:FF:000194">
    <property type="entry name" value="Intercellular adhesion molecule 1"/>
    <property type="match status" value="1"/>
</dbReference>
<dbReference type="FunFam" id="2.60.40.10:FF:001426">
    <property type="entry name" value="Intercellular adhesion molecule 4"/>
    <property type="match status" value="1"/>
</dbReference>
<dbReference type="Gene3D" id="2.60.40.10">
    <property type="entry name" value="Immunoglobulins"/>
    <property type="match status" value="2"/>
</dbReference>
<dbReference type="InterPro" id="IPR013768">
    <property type="entry name" value="ICAM_N"/>
</dbReference>
<dbReference type="InterPro" id="IPR047012">
    <property type="entry name" value="ICAM_VCAM"/>
</dbReference>
<dbReference type="InterPro" id="IPR003987">
    <property type="entry name" value="ICAM_VCAM_N"/>
</dbReference>
<dbReference type="InterPro" id="IPR036179">
    <property type="entry name" value="Ig-like_dom_sf"/>
</dbReference>
<dbReference type="InterPro" id="IPR013783">
    <property type="entry name" value="Ig-like_fold"/>
</dbReference>
<dbReference type="PANTHER" id="PTHR13771">
    <property type="entry name" value="INTERCELLULAR ADHESION MOLECULE"/>
    <property type="match status" value="1"/>
</dbReference>
<dbReference type="PANTHER" id="PTHR13771:SF8">
    <property type="entry name" value="INTERCELLULAR ADHESION MOLECULE 4"/>
    <property type="match status" value="1"/>
</dbReference>
<dbReference type="Pfam" id="PF03921">
    <property type="entry name" value="ICAM_N"/>
    <property type="match status" value="1"/>
</dbReference>
<dbReference type="PRINTS" id="PR01472">
    <property type="entry name" value="ICAMVCAM1"/>
</dbReference>
<dbReference type="SUPFAM" id="SSF48726">
    <property type="entry name" value="Immunoglobulin"/>
    <property type="match status" value="2"/>
</dbReference>
<sequence length="271" mass="29265">MGSLFPLSLLFFLAAAYPGVGSALGRRTKRAQSPKGSPLAPSGTSVPFWVRMSPEFVAVQPGKSVQLNCSNSCPQPQNSSLRTPLRQGKTLRGPGWVSYQLLDVRAWSSLAHCLVTCAGKTRWATSRITAYKPPHSVILEPPVLKGRKYTLRCHVTQVFPVGYLVVTLRHGSRVIYSESLERFTGLDLANVTLTYEFAAGPRDFWQPVICHARLNLDGLVVRNSSAPITLMLAWSPAPTALASGSIAALVGILLTVGAAYLCKCLAMKSQA</sequence>
<evidence type="ECO:0000250" key="1"/>
<evidence type="ECO:0000250" key="2">
    <source>
        <dbReference type="UniProtKB" id="P32942"/>
    </source>
</evidence>
<evidence type="ECO:0000250" key="3">
    <source>
        <dbReference type="UniProtKB" id="Q9ERM2"/>
    </source>
</evidence>
<evidence type="ECO:0000255" key="4"/>
<evidence type="ECO:0000255" key="5">
    <source>
        <dbReference type="PROSITE-ProRule" id="PRU00114"/>
    </source>
</evidence>
<evidence type="ECO:0000269" key="6">
    <source>
    </source>
</evidence>
<evidence type="ECO:0000269" key="7">
    <source>
    </source>
</evidence>
<evidence type="ECO:0000269" key="8">
    <source ref="4"/>
</evidence>
<evidence type="ECO:0000303" key="9">
    <source>
    </source>
</evidence>
<evidence type="ECO:0000303" key="10">
    <source>
    </source>
</evidence>
<evidence type="ECO:0000303" key="11">
    <source ref="3"/>
</evidence>
<evidence type="ECO:0000305" key="12"/>